<geneLocation type="chloroplast"/>
<gene>
    <name type="primary">rpl2-A</name>
</gene>
<gene>
    <name type="primary">rpl2-B</name>
</gene>
<dbReference type="EMBL" id="DQ354691">
    <property type="protein sequence ID" value="ABC60500.1"/>
    <property type="molecule type" value="Genomic_DNA"/>
</dbReference>
<dbReference type="EMBL" id="DQ354691">
    <property type="protein sequence ID" value="ABC60522.1"/>
    <property type="molecule type" value="Genomic_DNA"/>
</dbReference>
<dbReference type="SMR" id="A1XFZ7"/>
<dbReference type="GO" id="GO:0009507">
    <property type="term" value="C:chloroplast"/>
    <property type="evidence" value="ECO:0007669"/>
    <property type="project" value="UniProtKB-SubCell"/>
</dbReference>
<dbReference type="GO" id="GO:0005762">
    <property type="term" value="C:mitochondrial large ribosomal subunit"/>
    <property type="evidence" value="ECO:0007669"/>
    <property type="project" value="TreeGrafter"/>
</dbReference>
<dbReference type="GO" id="GO:0019843">
    <property type="term" value="F:rRNA binding"/>
    <property type="evidence" value="ECO:0007669"/>
    <property type="project" value="UniProtKB-UniRule"/>
</dbReference>
<dbReference type="GO" id="GO:0003735">
    <property type="term" value="F:structural constituent of ribosome"/>
    <property type="evidence" value="ECO:0007669"/>
    <property type="project" value="InterPro"/>
</dbReference>
<dbReference type="GO" id="GO:0016740">
    <property type="term" value="F:transferase activity"/>
    <property type="evidence" value="ECO:0007669"/>
    <property type="project" value="InterPro"/>
</dbReference>
<dbReference type="GO" id="GO:0032543">
    <property type="term" value="P:mitochondrial translation"/>
    <property type="evidence" value="ECO:0007669"/>
    <property type="project" value="TreeGrafter"/>
</dbReference>
<dbReference type="FunFam" id="4.10.950.10:FF:000001">
    <property type="entry name" value="50S ribosomal protein L2"/>
    <property type="match status" value="1"/>
</dbReference>
<dbReference type="FunFam" id="2.30.30.30:FF:000008">
    <property type="entry name" value="50S ribosomal protein L2, chloroplastic"/>
    <property type="match status" value="1"/>
</dbReference>
<dbReference type="FunFam" id="2.40.50.140:FF:000029">
    <property type="entry name" value="50S ribosomal protein L2, chloroplastic"/>
    <property type="match status" value="1"/>
</dbReference>
<dbReference type="Gene3D" id="2.30.30.30">
    <property type="match status" value="1"/>
</dbReference>
<dbReference type="Gene3D" id="2.40.50.140">
    <property type="entry name" value="Nucleic acid-binding proteins"/>
    <property type="match status" value="1"/>
</dbReference>
<dbReference type="Gene3D" id="4.10.950.10">
    <property type="entry name" value="Ribosomal protein L2, domain 3"/>
    <property type="match status" value="1"/>
</dbReference>
<dbReference type="HAMAP" id="MF_01320_B">
    <property type="entry name" value="Ribosomal_uL2_B"/>
    <property type="match status" value="1"/>
</dbReference>
<dbReference type="InterPro" id="IPR012340">
    <property type="entry name" value="NA-bd_OB-fold"/>
</dbReference>
<dbReference type="InterPro" id="IPR014722">
    <property type="entry name" value="Rib_uL2_dom2"/>
</dbReference>
<dbReference type="InterPro" id="IPR002171">
    <property type="entry name" value="Ribosomal_uL2"/>
</dbReference>
<dbReference type="InterPro" id="IPR005880">
    <property type="entry name" value="Ribosomal_uL2_bac/org-type"/>
</dbReference>
<dbReference type="InterPro" id="IPR022669">
    <property type="entry name" value="Ribosomal_uL2_C"/>
</dbReference>
<dbReference type="InterPro" id="IPR022671">
    <property type="entry name" value="Ribosomal_uL2_CS"/>
</dbReference>
<dbReference type="InterPro" id="IPR014726">
    <property type="entry name" value="Ribosomal_uL2_dom3"/>
</dbReference>
<dbReference type="InterPro" id="IPR022666">
    <property type="entry name" value="Ribosomal_uL2_RNA-bd_dom"/>
</dbReference>
<dbReference type="InterPro" id="IPR008991">
    <property type="entry name" value="Translation_prot_SH3-like_sf"/>
</dbReference>
<dbReference type="NCBIfam" id="TIGR01171">
    <property type="entry name" value="rplB_bact"/>
    <property type="match status" value="1"/>
</dbReference>
<dbReference type="PANTHER" id="PTHR13691:SF5">
    <property type="entry name" value="LARGE RIBOSOMAL SUBUNIT PROTEIN UL2M"/>
    <property type="match status" value="1"/>
</dbReference>
<dbReference type="PANTHER" id="PTHR13691">
    <property type="entry name" value="RIBOSOMAL PROTEIN L2"/>
    <property type="match status" value="1"/>
</dbReference>
<dbReference type="Pfam" id="PF00181">
    <property type="entry name" value="Ribosomal_L2"/>
    <property type="match status" value="1"/>
</dbReference>
<dbReference type="Pfam" id="PF03947">
    <property type="entry name" value="Ribosomal_L2_C"/>
    <property type="match status" value="1"/>
</dbReference>
<dbReference type="PIRSF" id="PIRSF002158">
    <property type="entry name" value="Ribosomal_L2"/>
    <property type="match status" value="1"/>
</dbReference>
<dbReference type="SMART" id="SM01383">
    <property type="entry name" value="Ribosomal_L2"/>
    <property type="match status" value="1"/>
</dbReference>
<dbReference type="SMART" id="SM01382">
    <property type="entry name" value="Ribosomal_L2_C"/>
    <property type="match status" value="1"/>
</dbReference>
<dbReference type="SUPFAM" id="SSF50249">
    <property type="entry name" value="Nucleic acid-binding proteins"/>
    <property type="match status" value="1"/>
</dbReference>
<dbReference type="SUPFAM" id="SSF50104">
    <property type="entry name" value="Translation proteins SH3-like domain"/>
    <property type="match status" value="1"/>
</dbReference>
<dbReference type="PROSITE" id="PS00467">
    <property type="entry name" value="RIBOSOMAL_L2"/>
    <property type="match status" value="1"/>
</dbReference>
<organism>
    <name type="scientific">Nuphar advena</name>
    <name type="common">Common spatterdock</name>
    <name type="synonym">Nuphar lutea subsp. advena</name>
    <dbReference type="NCBI Taxonomy" id="77108"/>
    <lineage>
        <taxon>Eukaryota</taxon>
        <taxon>Viridiplantae</taxon>
        <taxon>Streptophyta</taxon>
        <taxon>Embryophyta</taxon>
        <taxon>Tracheophyta</taxon>
        <taxon>Spermatophyta</taxon>
        <taxon>Magnoliopsida</taxon>
        <taxon>Nymphaeales</taxon>
        <taxon>Nymphaeaceae</taxon>
        <taxon>Nuphar</taxon>
    </lineage>
</organism>
<accession>A1XFZ7</accession>
<feature type="chain" id="PRO_0000310083" description="Large ribosomal subunit protein uL2cz/uL2cy">
    <location>
        <begin position="1"/>
        <end position="273"/>
    </location>
</feature>
<feature type="region of interest" description="Disordered" evidence="3">
    <location>
        <begin position="1"/>
        <end position="20"/>
    </location>
</feature>
<feature type="region of interest" description="Disordered" evidence="3">
    <location>
        <begin position="224"/>
        <end position="254"/>
    </location>
</feature>
<comment type="subunit">
    <text evidence="1">Part of the 50S ribosomal subunit.</text>
</comment>
<comment type="subcellular location">
    <subcellularLocation>
        <location>Plastid</location>
        <location>Chloroplast</location>
    </subcellularLocation>
</comment>
<comment type="similarity">
    <text evidence="4">Belongs to the universal ribosomal protein uL2 family.</text>
</comment>
<proteinExistence type="inferred from homology"/>
<keyword id="KW-0150">Chloroplast</keyword>
<keyword id="KW-0934">Plastid</keyword>
<keyword id="KW-0687">Ribonucleoprotein</keyword>
<keyword id="KW-0689">Ribosomal protein</keyword>
<reference key="1">
    <citation type="journal article" date="2007" name="BMC Genomics">
        <title>Comparative chloroplast genomics: analyses including new sequences from the angiosperms Nuphar advena and Ranunculus macranthus.</title>
        <authorList>
            <person name="Raubeson L.A."/>
            <person name="Peery R."/>
            <person name="Chumley T.W."/>
            <person name="Dziubek C."/>
            <person name="Fourcade H.M."/>
            <person name="Boore J.L."/>
            <person name="Jansen R.K."/>
        </authorList>
    </citation>
    <scope>NUCLEOTIDE SEQUENCE [LARGE SCALE GENOMIC DNA]</scope>
</reference>
<protein>
    <recommendedName>
        <fullName evidence="2">Large ribosomal subunit protein uL2cz/uL2cy</fullName>
    </recommendedName>
    <alternativeName>
        <fullName evidence="4">50S ribosomal protein L2, chloroplastic</fullName>
    </alternativeName>
</protein>
<sequence>MAIHLYKTSTPSTRKGAVDSQVKSNPRTNLIYGQHRCGKGRNARGIITARHRGGGHKRLYRKIDFRRNEKDISGRIVTIEYDPNRNAYICLIHYGDGEKRYILHPRGAIIGDTIVSGTEVPISMGNALPLTDMPLGTAIHNIEITLGKGGQLARAAGAVAKLIAKEGKSATLRLPSGEVRLISKNCSATVGQVGNVGVNQKSLGRAGSKCWLGKRPVVRGVVMNPVDHPHGGGEGRAPIGRKKPTTPWGYPALGRRSRKRNKYSDIFILRRRK</sequence>
<name>RK2_NUPAD</name>
<evidence type="ECO:0000250" key="1"/>
<evidence type="ECO:0000255" key="2">
    <source>
        <dbReference type="HAMAP-Rule" id="MF_01320"/>
    </source>
</evidence>
<evidence type="ECO:0000256" key="3">
    <source>
        <dbReference type="SAM" id="MobiDB-lite"/>
    </source>
</evidence>
<evidence type="ECO:0000305" key="4"/>